<proteinExistence type="inferred from homology"/>
<protein>
    <recommendedName>
        <fullName evidence="2">Large ribosomal subunit protein uL2cz/uL2cy</fullName>
    </recommendedName>
    <alternativeName>
        <fullName evidence="4">50S ribosomal protein L2, chloroplastic</fullName>
    </alternativeName>
</protein>
<feature type="chain" id="PRO_0000277084" description="Large ribosomal subunit protein uL2cz/uL2cy">
    <location>
        <begin position="1"/>
        <end position="274"/>
    </location>
</feature>
<feature type="region of interest" description="Disordered" evidence="3">
    <location>
        <begin position="1"/>
        <end position="25"/>
    </location>
</feature>
<feature type="region of interest" description="Disordered" evidence="3">
    <location>
        <begin position="223"/>
        <end position="274"/>
    </location>
</feature>
<dbReference type="EMBL" id="DQ864733">
    <property type="protein sequence ID" value="ABI49060.1"/>
    <property type="molecule type" value="Genomic_DNA"/>
</dbReference>
<dbReference type="EMBL" id="DQ864733">
    <property type="protein sequence ID" value="ABI49086.1"/>
    <property type="molecule type" value="Genomic_DNA"/>
</dbReference>
<dbReference type="SMR" id="Q09MB2"/>
<dbReference type="KEGG" id="cit:4271193"/>
<dbReference type="KEGG" id="cit:4271224"/>
<dbReference type="OrthoDB" id="867874at71240"/>
<dbReference type="GO" id="GO:0009507">
    <property type="term" value="C:chloroplast"/>
    <property type="evidence" value="ECO:0007669"/>
    <property type="project" value="UniProtKB-SubCell"/>
</dbReference>
<dbReference type="GO" id="GO:0015934">
    <property type="term" value="C:large ribosomal subunit"/>
    <property type="evidence" value="ECO:0007669"/>
    <property type="project" value="InterPro"/>
</dbReference>
<dbReference type="GO" id="GO:0019843">
    <property type="term" value="F:rRNA binding"/>
    <property type="evidence" value="ECO:0007669"/>
    <property type="project" value="UniProtKB-UniRule"/>
</dbReference>
<dbReference type="GO" id="GO:0003735">
    <property type="term" value="F:structural constituent of ribosome"/>
    <property type="evidence" value="ECO:0007669"/>
    <property type="project" value="InterPro"/>
</dbReference>
<dbReference type="GO" id="GO:0016740">
    <property type="term" value="F:transferase activity"/>
    <property type="evidence" value="ECO:0007669"/>
    <property type="project" value="InterPro"/>
</dbReference>
<dbReference type="GO" id="GO:0006412">
    <property type="term" value="P:translation"/>
    <property type="evidence" value="ECO:0007669"/>
    <property type="project" value="UniProtKB-UniRule"/>
</dbReference>
<dbReference type="FunFam" id="4.10.950.10:FF:000001">
    <property type="entry name" value="50S ribosomal protein L2"/>
    <property type="match status" value="1"/>
</dbReference>
<dbReference type="FunFam" id="2.30.30.30:FF:000008">
    <property type="entry name" value="50S ribosomal protein L2, chloroplastic"/>
    <property type="match status" value="1"/>
</dbReference>
<dbReference type="FunFam" id="2.40.50.140:FF:000029">
    <property type="entry name" value="50S ribosomal protein L2, chloroplastic"/>
    <property type="match status" value="1"/>
</dbReference>
<dbReference type="Gene3D" id="2.30.30.30">
    <property type="match status" value="1"/>
</dbReference>
<dbReference type="Gene3D" id="2.40.50.140">
    <property type="entry name" value="Nucleic acid-binding proteins"/>
    <property type="match status" value="1"/>
</dbReference>
<dbReference type="Gene3D" id="4.10.950.10">
    <property type="entry name" value="Ribosomal protein L2, domain 3"/>
    <property type="match status" value="1"/>
</dbReference>
<dbReference type="HAMAP" id="MF_01320_B">
    <property type="entry name" value="Ribosomal_uL2_B"/>
    <property type="match status" value="1"/>
</dbReference>
<dbReference type="InterPro" id="IPR012340">
    <property type="entry name" value="NA-bd_OB-fold"/>
</dbReference>
<dbReference type="InterPro" id="IPR014722">
    <property type="entry name" value="Rib_uL2_dom2"/>
</dbReference>
<dbReference type="InterPro" id="IPR002171">
    <property type="entry name" value="Ribosomal_uL2"/>
</dbReference>
<dbReference type="InterPro" id="IPR005880">
    <property type="entry name" value="Ribosomal_uL2_bac/org-type"/>
</dbReference>
<dbReference type="InterPro" id="IPR022669">
    <property type="entry name" value="Ribosomal_uL2_C"/>
</dbReference>
<dbReference type="InterPro" id="IPR022671">
    <property type="entry name" value="Ribosomal_uL2_CS"/>
</dbReference>
<dbReference type="InterPro" id="IPR014726">
    <property type="entry name" value="Ribosomal_uL2_dom3"/>
</dbReference>
<dbReference type="InterPro" id="IPR022666">
    <property type="entry name" value="Ribosomal_uL2_RNA-bd_dom"/>
</dbReference>
<dbReference type="InterPro" id="IPR008991">
    <property type="entry name" value="Translation_prot_SH3-like_sf"/>
</dbReference>
<dbReference type="NCBIfam" id="TIGR01171">
    <property type="entry name" value="rplB_bact"/>
    <property type="match status" value="1"/>
</dbReference>
<dbReference type="PANTHER" id="PTHR13691:SF5">
    <property type="entry name" value="LARGE RIBOSOMAL SUBUNIT PROTEIN UL2M"/>
    <property type="match status" value="1"/>
</dbReference>
<dbReference type="PANTHER" id="PTHR13691">
    <property type="entry name" value="RIBOSOMAL PROTEIN L2"/>
    <property type="match status" value="1"/>
</dbReference>
<dbReference type="Pfam" id="PF00181">
    <property type="entry name" value="Ribosomal_L2"/>
    <property type="match status" value="1"/>
</dbReference>
<dbReference type="Pfam" id="PF03947">
    <property type="entry name" value="Ribosomal_L2_C"/>
    <property type="match status" value="1"/>
</dbReference>
<dbReference type="PIRSF" id="PIRSF002158">
    <property type="entry name" value="Ribosomal_L2"/>
    <property type="match status" value="1"/>
</dbReference>
<dbReference type="SMART" id="SM01383">
    <property type="entry name" value="Ribosomal_L2"/>
    <property type="match status" value="1"/>
</dbReference>
<dbReference type="SMART" id="SM01382">
    <property type="entry name" value="Ribosomal_L2_C"/>
    <property type="match status" value="1"/>
</dbReference>
<dbReference type="SUPFAM" id="SSF50249">
    <property type="entry name" value="Nucleic acid-binding proteins"/>
    <property type="match status" value="1"/>
</dbReference>
<dbReference type="SUPFAM" id="SSF50104">
    <property type="entry name" value="Translation proteins SH3-like domain"/>
    <property type="match status" value="1"/>
</dbReference>
<dbReference type="PROSITE" id="PS00467">
    <property type="entry name" value="RIBOSOMAL_L2"/>
    <property type="match status" value="1"/>
</dbReference>
<geneLocation type="chloroplast"/>
<organism>
    <name type="scientific">Citrus sinensis</name>
    <name type="common">Sweet orange</name>
    <name type="synonym">Citrus aurantium var. sinensis</name>
    <dbReference type="NCBI Taxonomy" id="2711"/>
    <lineage>
        <taxon>Eukaryota</taxon>
        <taxon>Viridiplantae</taxon>
        <taxon>Streptophyta</taxon>
        <taxon>Embryophyta</taxon>
        <taxon>Tracheophyta</taxon>
        <taxon>Spermatophyta</taxon>
        <taxon>Magnoliopsida</taxon>
        <taxon>eudicotyledons</taxon>
        <taxon>Gunneridae</taxon>
        <taxon>Pentapetalae</taxon>
        <taxon>rosids</taxon>
        <taxon>malvids</taxon>
        <taxon>Sapindales</taxon>
        <taxon>Rutaceae</taxon>
        <taxon>Aurantioideae</taxon>
        <taxon>Citrus</taxon>
    </lineage>
</organism>
<accession>Q09MB2</accession>
<comment type="subunit">
    <text evidence="1">Part of the 50S ribosomal subunit.</text>
</comment>
<comment type="subcellular location">
    <subcellularLocation>
        <location>Plastid</location>
        <location>Chloroplast</location>
    </subcellularLocation>
</comment>
<comment type="similarity">
    <text evidence="4">Belongs to the universal ribosomal protein uL2 family.</text>
</comment>
<reference key="1">
    <citation type="journal article" date="2006" name="BMC Plant Biol.">
        <title>The complete chloroplast genome sequence of Citrus sinensis (L.) Osbeck var 'Ridge Pineapple': organization and phylogenetic relationships to other angiosperms.</title>
        <authorList>
            <person name="Bausher M.G."/>
            <person name="Singh N.D."/>
            <person name="Lee S.-B."/>
            <person name="Jansen R.K."/>
            <person name="Daniell H."/>
        </authorList>
    </citation>
    <scope>NUCLEOTIDE SEQUENCE [LARGE SCALE GENOMIC DNA]</scope>
    <source>
        <strain>cv. Osbeck var. Ridge Pineapple</strain>
    </source>
</reference>
<gene>
    <name type="primary">rpl2-A</name>
</gene>
<gene>
    <name type="primary">rpl2-B</name>
</gene>
<evidence type="ECO:0000250" key="1"/>
<evidence type="ECO:0000255" key="2">
    <source>
        <dbReference type="HAMAP-Rule" id="MF_01320"/>
    </source>
</evidence>
<evidence type="ECO:0000256" key="3">
    <source>
        <dbReference type="SAM" id="MobiDB-lite"/>
    </source>
</evidence>
<evidence type="ECO:0000305" key="4"/>
<keyword id="KW-0150">Chloroplast</keyword>
<keyword id="KW-0934">Plastid</keyword>
<keyword id="KW-0687">Ribonucleoprotein</keyword>
<keyword id="KW-0689">Ribosomal protein</keyword>
<name>RK2_CITSI</name>
<sequence length="274" mass="29831">MAIHLYKTSTPSTRNGAVDSQVKSNPRNNLIYGQHRCGKGRNARGIITAGHRGGGHKRLYRKIDFRRNEKDIYGRIVTIEYDPNRNAYICLIHYGDGEKRYILHPRGAIIGDTIVSGTEVPIKMGNALPLTDMPLGTAIHNIEITLGKGGQLARAAGAVAKLIAKEGKSATLKLPSGEVRLISKNCSATVGQVGNVGANQKSLGRAGSKCWLGKRPVVRGVVMNPVDHPHGGGEGRAPIGRKRPATPWGYPALGRRSRKRNKYSDNLILRRRTK</sequence>